<dbReference type="EMBL" id="AE017343">
    <property type="protein sequence ID" value="AAW42383.2"/>
    <property type="status" value="ALT_INIT"/>
    <property type="molecule type" value="Genomic_DNA"/>
</dbReference>
<dbReference type="RefSeq" id="XP_569690.1">
    <property type="nucleotide sequence ID" value="XM_569690.1"/>
</dbReference>
<dbReference type="FunCoup" id="P0CR64">
    <property type="interactions" value="44"/>
</dbReference>
<dbReference type="STRING" id="214684.P0CR64"/>
<dbReference type="PaxDb" id="214684-P0CR64"/>
<dbReference type="EnsemblFungi" id="AAW42383">
    <property type="protein sequence ID" value="AAW42383"/>
    <property type="gene ID" value="CNC03560"/>
</dbReference>
<dbReference type="GeneID" id="3256123"/>
<dbReference type="KEGG" id="cne:CNC03560"/>
<dbReference type="eggNOG" id="KOG2273">
    <property type="taxonomic scope" value="Eukaryota"/>
</dbReference>
<dbReference type="HOGENOM" id="CLU_014456_1_1_1"/>
<dbReference type="InParanoid" id="P0CR64"/>
<dbReference type="OMA" id="CRRMKEV"/>
<dbReference type="OrthoDB" id="289314at2759"/>
<dbReference type="Proteomes" id="UP000002149">
    <property type="component" value="Chromosome 3"/>
</dbReference>
<dbReference type="GO" id="GO:0005829">
    <property type="term" value="C:cytosol"/>
    <property type="evidence" value="ECO:0007669"/>
    <property type="project" value="GOC"/>
</dbReference>
<dbReference type="GO" id="GO:0010008">
    <property type="term" value="C:endosome membrane"/>
    <property type="evidence" value="ECO:0007669"/>
    <property type="project" value="UniProtKB-SubCell"/>
</dbReference>
<dbReference type="GO" id="GO:0000407">
    <property type="term" value="C:phagophore assembly site"/>
    <property type="evidence" value="ECO:0000318"/>
    <property type="project" value="GO_Central"/>
</dbReference>
<dbReference type="GO" id="GO:0032266">
    <property type="term" value="F:phosphatidylinositol-3-phosphate binding"/>
    <property type="evidence" value="ECO:0000318"/>
    <property type="project" value="GO_Central"/>
</dbReference>
<dbReference type="GO" id="GO:0000422">
    <property type="term" value="P:autophagy of mitochondrion"/>
    <property type="evidence" value="ECO:0000318"/>
    <property type="project" value="GO_Central"/>
</dbReference>
<dbReference type="GO" id="GO:0015031">
    <property type="term" value="P:protein transport"/>
    <property type="evidence" value="ECO:0007669"/>
    <property type="project" value="UniProtKB-KW"/>
</dbReference>
<dbReference type="GO" id="GO:0061709">
    <property type="term" value="P:reticulophagy"/>
    <property type="evidence" value="ECO:0000318"/>
    <property type="project" value="GO_Central"/>
</dbReference>
<dbReference type="GO" id="GO:0042147">
    <property type="term" value="P:retrograde transport, endosome to Golgi"/>
    <property type="evidence" value="ECO:0007669"/>
    <property type="project" value="InterPro"/>
</dbReference>
<dbReference type="CDD" id="cd07629">
    <property type="entry name" value="BAR_Atg20p"/>
    <property type="match status" value="1"/>
</dbReference>
<dbReference type="CDD" id="cd06867">
    <property type="entry name" value="PX_SNX41_42"/>
    <property type="match status" value="1"/>
</dbReference>
<dbReference type="Gene3D" id="1.20.1270.60">
    <property type="entry name" value="Arfaptin homology (AH) domain/BAR domain"/>
    <property type="match status" value="1"/>
</dbReference>
<dbReference type="Gene3D" id="3.30.1520.10">
    <property type="entry name" value="Phox-like domain"/>
    <property type="match status" value="1"/>
</dbReference>
<dbReference type="InterPro" id="IPR027267">
    <property type="entry name" value="AH/BAR_dom_sf"/>
</dbReference>
<dbReference type="InterPro" id="IPR001683">
    <property type="entry name" value="PX_dom"/>
</dbReference>
<dbReference type="InterPro" id="IPR036871">
    <property type="entry name" value="PX_dom_sf"/>
</dbReference>
<dbReference type="InterPro" id="IPR044106">
    <property type="entry name" value="PX_Snx41/Atg20"/>
</dbReference>
<dbReference type="InterPro" id="IPR051079">
    <property type="entry name" value="Sorting_Nexin_Autophagy"/>
</dbReference>
<dbReference type="PANTHER" id="PTHR46979">
    <property type="entry name" value="SORTING NEXIN-41"/>
    <property type="match status" value="1"/>
</dbReference>
<dbReference type="PANTHER" id="PTHR46979:SF2">
    <property type="entry name" value="SORTING NEXIN-41"/>
    <property type="match status" value="1"/>
</dbReference>
<dbReference type="Pfam" id="PF00787">
    <property type="entry name" value="PX"/>
    <property type="match status" value="1"/>
</dbReference>
<dbReference type="SMART" id="SM00312">
    <property type="entry name" value="PX"/>
    <property type="match status" value="1"/>
</dbReference>
<dbReference type="SUPFAM" id="SSF64268">
    <property type="entry name" value="PX domain"/>
    <property type="match status" value="1"/>
</dbReference>
<dbReference type="PROSITE" id="PS50195">
    <property type="entry name" value="PX"/>
    <property type="match status" value="1"/>
</dbReference>
<proteinExistence type="inferred from homology"/>
<organism>
    <name type="scientific">Cryptococcus neoformans var. neoformans serotype D (strain JEC21 / ATCC MYA-565)</name>
    <name type="common">Filobasidiella neoformans</name>
    <dbReference type="NCBI Taxonomy" id="214684"/>
    <lineage>
        <taxon>Eukaryota</taxon>
        <taxon>Fungi</taxon>
        <taxon>Dikarya</taxon>
        <taxon>Basidiomycota</taxon>
        <taxon>Agaricomycotina</taxon>
        <taxon>Tremellomycetes</taxon>
        <taxon>Tremellales</taxon>
        <taxon>Cryptococcaceae</taxon>
        <taxon>Cryptococcus</taxon>
        <taxon>Cryptococcus neoformans species complex</taxon>
    </lineage>
</organism>
<gene>
    <name type="primary">SNX41</name>
    <name type="ordered locus">CNC03560</name>
</gene>
<sequence length="638" mass="70714">MDSDTSPNPFASSPPSSPSPRPSLPPPVPRKPSSLVSAASGSPPPTHRASFPDPARHPKMGATVPGPKPKTGYCCSIDKDISAGEQVHIVDALKTTEGGTASYITYVIRLGTHTVRRRYSAFLSLHQSLTGLYPVLIIPPIPSKQSLTDYAVKGQSKAREDATIIARRKRLLEDFLQRLIRHPILGGEHVLHRFLEEDVSWSEVLHSPPISLLSKNPLHAPSHNPTFQPTTPTSPSEAPATTSYIAHHLLPTPSPSHPLRQPDQRFMDSEAFTEKFQSHFSGTMEKVNRRVTKRWGERAHDMSELGGIWNGFSLVEQGKLGDAIEKVGRAVDAEYLATAALLQSWEKTTTEPLHIYSQFATLIRARLSFRHQKHVQYELVQEALETQRDKLEILENAEREARRLEEALERGGSVLASPQLEPEAARDERERAQRRARASQGFGLLSAVKHSLSGMIDMDPEATRRANIAKTRDNISQLEDSYQAAAQDLKYASMTLQADLDRFQRQKVADLREMAINLSQVHRDWCKQNLEAWKAAQAAVREIDPHPNRPAQTQTQVQSQQSHAGPSTLHAQTEDDVSKLGVDAMKNEIERVEIEIADKPLPKPSLAETGGDGVVPSPQPRQENDTEEQEGHGPLGPL</sequence>
<reference key="1">
    <citation type="journal article" date="2005" name="Science">
        <title>The genome of the basidiomycetous yeast and human pathogen Cryptococcus neoformans.</title>
        <authorList>
            <person name="Loftus B.J."/>
            <person name="Fung E."/>
            <person name="Roncaglia P."/>
            <person name="Rowley D."/>
            <person name="Amedeo P."/>
            <person name="Bruno D."/>
            <person name="Vamathevan J."/>
            <person name="Miranda M."/>
            <person name="Anderson I.J."/>
            <person name="Fraser J.A."/>
            <person name="Allen J.E."/>
            <person name="Bosdet I.E."/>
            <person name="Brent M.R."/>
            <person name="Chiu R."/>
            <person name="Doering T.L."/>
            <person name="Donlin M.J."/>
            <person name="D'Souza C.A."/>
            <person name="Fox D.S."/>
            <person name="Grinberg V."/>
            <person name="Fu J."/>
            <person name="Fukushima M."/>
            <person name="Haas B.J."/>
            <person name="Huang J.C."/>
            <person name="Janbon G."/>
            <person name="Jones S.J.M."/>
            <person name="Koo H.L."/>
            <person name="Krzywinski M.I."/>
            <person name="Kwon-Chung K.J."/>
            <person name="Lengeler K.B."/>
            <person name="Maiti R."/>
            <person name="Marra M.A."/>
            <person name="Marra R.E."/>
            <person name="Mathewson C.A."/>
            <person name="Mitchell T.G."/>
            <person name="Pertea M."/>
            <person name="Riggs F.R."/>
            <person name="Salzberg S.L."/>
            <person name="Schein J.E."/>
            <person name="Shvartsbeyn A."/>
            <person name="Shin H."/>
            <person name="Shumway M."/>
            <person name="Specht C.A."/>
            <person name="Suh B.B."/>
            <person name="Tenney A."/>
            <person name="Utterback T.R."/>
            <person name="Wickes B.L."/>
            <person name="Wortman J.R."/>
            <person name="Wye N.H."/>
            <person name="Kronstad J.W."/>
            <person name="Lodge J.K."/>
            <person name="Heitman J."/>
            <person name="Davis R.W."/>
            <person name="Fraser C.M."/>
            <person name="Hyman R.W."/>
        </authorList>
    </citation>
    <scope>NUCLEOTIDE SEQUENCE [LARGE SCALE GENOMIC DNA]</scope>
    <source>
        <strain>JEC21 / ATCC MYA-565</strain>
    </source>
</reference>
<keyword id="KW-0072">Autophagy</keyword>
<keyword id="KW-0967">Endosome</keyword>
<keyword id="KW-0446">Lipid-binding</keyword>
<keyword id="KW-0472">Membrane</keyword>
<keyword id="KW-0653">Protein transport</keyword>
<keyword id="KW-1185">Reference proteome</keyword>
<keyword id="KW-0813">Transport</keyword>
<name>SNX41_CRYNJ</name>
<accession>P0CR64</accession>
<accession>Q55VX2</accession>
<accession>Q5KKB9</accession>
<comment type="function">
    <text evidence="1">May be required for cytoplasm to vacuole transport (Cvt) and pexophagy.</text>
</comment>
<comment type="subcellular location">
    <subcellularLocation>
        <location evidence="1">Endosome membrane</location>
        <topology evidence="1">Peripheral membrane protein</topology>
    </subcellularLocation>
    <subcellularLocation>
        <location evidence="1">Endomembrane system</location>
        <topology evidence="1">Peripheral membrane protein</topology>
    </subcellularLocation>
    <text evidence="1">Endosome and other perivacuolar punctate structures.</text>
</comment>
<comment type="domain">
    <text evidence="1">The PX domain binds phosphatidylinositol 3-phosphate which is necessary for peripheral membrane localization to the perivacuolar punctate structures.</text>
</comment>
<comment type="similarity">
    <text evidence="4">Belongs to the sorting nexin family.</text>
</comment>
<comment type="sequence caution" evidence="4">
    <conflict type="erroneous initiation">
        <sequence resource="EMBL-CDS" id="AAW42383"/>
    </conflict>
    <text>Truncated N-terminus.</text>
</comment>
<evidence type="ECO:0000250" key="1"/>
<evidence type="ECO:0000255" key="2">
    <source>
        <dbReference type="PROSITE-ProRule" id="PRU00147"/>
    </source>
</evidence>
<evidence type="ECO:0000256" key="3">
    <source>
        <dbReference type="SAM" id="MobiDB-lite"/>
    </source>
</evidence>
<evidence type="ECO:0000305" key="4"/>
<protein>
    <recommendedName>
        <fullName>Sorting nexin-41</fullName>
    </recommendedName>
</protein>
<feature type="chain" id="PRO_0000213827" description="Sorting nexin-41">
    <location>
        <begin position="1"/>
        <end position="638"/>
    </location>
</feature>
<feature type="domain" description="PX" evidence="2">
    <location>
        <begin position="84"/>
        <end position="201"/>
    </location>
</feature>
<feature type="region of interest" description="Disordered" evidence="3">
    <location>
        <begin position="1"/>
        <end position="69"/>
    </location>
</feature>
<feature type="region of interest" description="Disordered" evidence="3">
    <location>
        <begin position="215"/>
        <end position="239"/>
    </location>
</feature>
<feature type="region of interest" description="Disordered" evidence="3">
    <location>
        <begin position="408"/>
        <end position="432"/>
    </location>
</feature>
<feature type="region of interest" description="Disordered" evidence="3">
    <location>
        <begin position="545"/>
        <end position="638"/>
    </location>
</feature>
<feature type="compositionally biased region" description="Low complexity" evidence="3">
    <location>
        <begin position="1"/>
        <end position="14"/>
    </location>
</feature>
<feature type="compositionally biased region" description="Pro residues" evidence="3">
    <location>
        <begin position="15"/>
        <end position="30"/>
    </location>
</feature>
<feature type="compositionally biased region" description="Low complexity" evidence="3">
    <location>
        <begin position="225"/>
        <end position="239"/>
    </location>
</feature>
<feature type="compositionally biased region" description="Basic and acidic residues" evidence="3">
    <location>
        <begin position="423"/>
        <end position="432"/>
    </location>
</feature>
<feature type="compositionally biased region" description="Low complexity" evidence="3">
    <location>
        <begin position="552"/>
        <end position="562"/>
    </location>
</feature>
<feature type="compositionally biased region" description="Basic and acidic residues" evidence="3">
    <location>
        <begin position="585"/>
        <end position="601"/>
    </location>
</feature>
<feature type="binding site" evidence="1">
    <location>
        <position position="118"/>
    </location>
    <ligand>
        <name>a 1,2-diacyl-sn-glycero-3-phospho-(1D-myo-inositol-3-phosphate)</name>
        <dbReference type="ChEBI" id="CHEBI:58088"/>
    </ligand>
</feature>
<feature type="binding site" evidence="1">
    <location>
        <position position="120"/>
    </location>
    <ligand>
        <name>a 1,2-diacyl-sn-glycero-3-phospho-(1D-myo-inositol-3-phosphate)</name>
        <dbReference type="ChEBI" id="CHEBI:58088"/>
    </ligand>
</feature>
<feature type="binding site" evidence="1">
    <location>
        <position position="144"/>
    </location>
    <ligand>
        <name>a 1,2-diacyl-sn-glycero-3-phospho-(1D-myo-inositol-3-phosphate)</name>
        <dbReference type="ChEBI" id="CHEBI:58088"/>
    </ligand>
</feature>
<feature type="binding site" evidence="1">
    <location>
        <position position="168"/>
    </location>
    <ligand>
        <name>a 1,2-diacyl-sn-glycero-3-phospho-(1D-myo-inositol-3-phosphate)</name>
        <dbReference type="ChEBI" id="CHEBI:58088"/>
    </ligand>
</feature>